<organism>
    <name type="scientific">Homo sapiens</name>
    <name type="common">Human</name>
    <dbReference type="NCBI Taxonomy" id="9606"/>
    <lineage>
        <taxon>Eukaryota</taxon>
        <taxon>Metazoa</taxon>
        <taxon>Chordata</taxon>
        <taxon>Craniata</taxon>
        <taxon>Vertebrata</taxon>
        <taxon>Euteleostomi</taxon>
        <taxon>Mammalia</taxon>
        <taxon>Eutheria</taxon>
        <taxon>Euarchontoglires</taxon>
        <taxon>Primates</taxon>
        <taxon>Haplorrhini</taxon>
        <taxon>Catarrhini</taxon>
        <taxon>Hominidae</taxon>
        <taxon>Homo</taxon>
    </lineage>
</organism>
<dbReference type="EMBL" id="AF255910">
    <property type="protein sequence ID" value="AAF81223.1"/>
    <property type="molecule type" value="mRNA"/>
</dbReference>
<dbReference type="EMBL" id="AY016009">
    <property type="protein sequence ID" value="AAG49022.1"/>
    <property type="molecule type" value="mRNA"/>
</dbReference>
<dbReference type="EMBL" id="AY077698">
    <property type="protein sequence ID" value="AAL82538.1"/>
    <property type="molecule type" value="mRNA"/>
</dbReference>
<dbReference type="EMBL" id="AY358361">
    <property type="protein sequence ID" value="AAQ88727.1"/>
    <property type="molecule type" value="mRNA"/>
</dbReference>
<dbReference type="EMBL" id="AK294769">
    <property type="protein sequence ID" value="BAG57900.1"/>
    <property type="molecule type" value="mRNA"/>
</dbReference>
<dbReference type="EMBL" id="AK312708">
    <property type="protein sequence ID" value="BAG35586.1"/>
    <property type="molecule type" value="mRNA"/>
</dbReference>
<dbReference type="EMBL" id="AP000223">
    <property type="status" value="NOT_ANNOTATED_CDS"/>
    <property type="molecule type" value="Genomic_DNA"/>
</dbReference>
<dbReference type="EMBL" id="AP000224">
    <property type="status" value="NOT_ANNOTATED_CDS"/>
    <property type="molecule type" value="Genomic_DNA"/>
</dbReference>
<dbReference type="EMBL" id="AP000225">
    <property type="status" value="NOT_ANNOTATED_CDS"/>
    <property type="molecule type" value="Genomic_DNA"/>
</dbReference>
<dbReference type="EMBL" id="AP000226">
    <property type="status" value="NOT_ANNOTATED_CDS"/>
    <property type="molecule type" value="Genomic_DNA"/>
</dbReference>
<dbReference type="EMBL" id="BC017779">
    <property type="protein sequence ID" value="AAH17779.1"/>
    <property type="molecule type" value="mRNA"/>
</dbReference>
<dbReference type="CCDS" id="CCDS42911.1">
    <molecule id="P57087-1"/>
</dbReference>
<dbReference type="CCDS" id="CCDS58787.1">
    <molecule id="P57087-3"/>
</dbReference>
<dbReference type="CCDS" id="CCDS58788.1">
    <molecule id="P57087-2"/>
</dbReference>
<dbReference type="RefSeq" id="NP_001257336.1">
    <molecule id="P57087-2"/>
    <property type="nucleotide sequence ID" value="NM_001270407.2"/>
</dbReference>
<dbReference type="RefSeq" id="NP_001257337.1">
    <molecule id="P57087-3"/>
    <property type="nucleotide sequence ID" value="NM_001270408.2"/>
</dbReference>
<dbReference type="RefSeq" id="NP_067042.1">
    <molecule id="P57087-1"/>
    <property type="nucleotide sequence ID" value="NM_021219.4"/>
</dbReference>
<dbReference type="SMR" id="P57087"/>
<dbReference type="BioGRID" id="121824">
    <property type="interactions" value="12"/>
</dbReference>
<dbReference type="CORUM" id="P57087"/>
<dbReference type="FunCoup" id="P57087">
    <property type="interactions" value="431"/>
</dbReference>
<dbReference type="IntAct" id="P57087">
    <property type="interactions" value="9"/>
</dbReference>
<dbReference type="MINT" id="P57087"/>
<dbReference type="STRING" id="9606.ENSP00000383376"/>
<dbReference type="ChEMBL" id="CHEMBL5483010"/>
<dbReference type="GlyCosmos" id="P57087">
    <property type="glycosylation" value="3 sites, No reported glycans"/>
</dbReference>
<dbReference type="GlyGen" id="P57087">
    <property type="glycosylation" value="3 sites, 4 N-linked glycans (1 site)"/>
</dbReference>
<dbReference type="iPTMnet" id="P57087"/>
<dbReference type="PhosphoSitePlus" id="P57087"/>
<dbReference type="SwissPalm" id="P57087"/>
<dbReference type="BioMuta" id="JAM2"/>
<dbReference type="DMDM" id="10720348"/>
<dbReference type="jPOST" id="P57087"/>
<dbReference type="MassIVE" id="P57087"/>
<dbReference type="PaxDb" id="9606-ENSP00000383376"/>
<dbReference type="PeptideAtlas" id="P57087"/>
<dbReference type="ProteomicsDB" id="4159"/>
<dbReference type="ProteomicsDB" id="56996">
    <molecule id="P57087-1"/>
</dbReference>
<dbReference type="Antibodypedia" id="4909">
    <property type="antibodies" value="470 antibodies from 37 providers"/>
</dbReference>
<dbReference type="DNASU" id="58494"/>
<dbReference type="Ensembl" id="ENST00000312957.9">
    <molecule id="P57087-2"/>
    <property type="protein sequence ID" value="ENSP00000318416.6"/>
    <property type="gene ID" value="ENSG00000154721.15"/>
</dbReference>
<dbReference type="Ensembl" id="ENST00000400532.5">
    <molecule id="P57087-3"/>
    <property type="protein sequence ID" value="ENSP00000383376.1"/>
    <property type="gene ID" value="ENSG00000154721.15"/>
</dbReference>
<dbReference type="Ensembl" id="ENST00000480456.6">
    <molecule id="P57087-1"/>
    <property type="protein sequence ID" value="ENSP00000420419.1"/>
    <property type="gene ID" value="ENSG00000154721.15"/>
</dbReference>
<dbReference type="GeneID" id="58494"/>
<dbReference type="KEGG" id="hsa:58494"/>
<dbReference type="MANE-Select" id="ENST00000480456.6">
    <property type="protein sequence ID" value="ENSP00000420419.1"/>
    <property type="RefSeq nucleotide sequence ID" value="NM_021219.4"/>
    <property type="RefSeq protein sequence ID" value="NP_067042.1"/>
</dbReference>
<dbReference type="UCSC" id="uc002ylp.3">
    <molecule id="P57087-1"/>
    <property type="organism name" value="human"/>
</dbReference>
<dbReference type="AGR" id="HGNC:14686"/>
<dbReference type="CTD" id="58494"/>
<dbReference type="DisGeNET" id="58494"/>
<dbReference type="GeneCards" id="JAM2"/>
<dbReference type="HGNC" id="HGNC:14686">
    <property type="gene designation" value="JAM2"/>
</dbReference>
<dbReference type="HPA" id="ENSG00000154721">
    <property type="expression patterns" value="Tissue enhanced (placenta)"/>
</dbReference>
<dbReference type="MalaCards" id="JAM2"/>
<dbReference type="MIM" id="606870">
    <property type="type" value="gene"/>
</dbReference>
<dbReference type="MIM" id="618824">
    <property type="type" value="phenotype"/>
</dbReference>
<dbReference type="neXtProt" id="NX_P57087"/>
<dbReference type="OpenTargets" id="ENSG00000154721"/>
<dbReference type="Orphanet" id="1980">
    <property type="disease" value="Bilateral striopallidodentate calcinosis"/>
</dbReference>
<dbReference type="PharmGKB" id="PA29992"/>
<dbReference type="VEuPathDB" id="HostDB:ENSG00000154721"/>
<dbReference type="eggNOG" id="ENOG502QZ6E">
    <property type="taxonomic scope" value="Eukaryota"/>
</dbReference>
<dbReference type="GeneTree" id="ENSGT00940000160634"/>
<dbReference type="HOGENOM" id="CLU_067351_1_0_1"/>
<dbReference type="InParanoid" id="P57087"/>
<dbReference type="OMA" id="ASEYRWY"/>
<dbReference type="OrthoDB" id="10015491at2759"/>
<dbReference type="PAN-GO" id="P57087">
    <property type="GO annotations" value="5 GO annotations based on evolutionary models"/>
</dbReference>
<dbReference type="PhylomeDB" id="P57087"/>
<dbReference type="TreeFam" id="TF331459"/>
<dbReference type="PathwayCommons" id="P57087"/>
<dbReference type="Reactome" id="R-HSA-202733">
    <property type="pathway name" value="Cell surface interactions at the vascular wall"/>
</dbReference>
<dbReference type="Reactome" id="R-HSA-216083">
    <property type="pathway name" value="Integrin cell surface interactions"/>
</dbReference>
<dbReference type="SignaLink" id="P57087"/>
<dbReference type="BioGRID-ORCS" id="58494">
    <property type="hits" value="14 hits in 1149 CRISPR screens"/>
</dbReference>
<dbReference type="ChiTaRS" id="JAM2">
    <property type="organism name" value="human"/>
</dbReference>
<dbReference type="GeneWiki" id="JAM2"/>
<dbReference type="GenomeRNAi" id="58494"/>
<dbReference type="Pharos" id="P57087">
    <property type="development level" value="Tbio"/>
</dbReference>
<dbReference type="PRO" id="PR:P57087"/>
<dbReference type="Proteomes" id="UP000005640">
    <property type="component" value="Chromosome 21"/>
</dbReference>
<dbReference type="RNAct" id="P57087">
    <property type="molecule type" value="protein"/>
</dbReference>
<dbReference type="Bgee" id="ENSG00000154721">
    <property type="expression patterns" value="Expressed in ventricular zone and 198 other cell types or tissues"/>
</dbReference>
<dbReference type="ExpressionAtlas" id="P57087">
    <property type="expression patterns" value="baseline and differential"/>
</dbReference>
<dbReference type="GO" id="GO:0005923">
    <property type="term" value="C:bicellular tight junction"/>
    <property type="evidence" value="ECO:0007669"/>
    <property type="project" value="UniProtKB-SubCell"/>
</dbReference>
<dbReference type="GO" id="GO:0009986">
    <property type="term" value="C:cell surface"/>
    <property type="evidence" value="ECO:0000314"/>
    <property type="project" value="ARUK-UCL"/>
</dbReference>
<dbReference type="GO" id="GO:0044291">
    <property type="term" value="C:cell-cell contact zone"/>
    <property type="evidence" value="ECO:0000314"/>
    <property type="project" value="ARUK-UCL"/>
</dbReference>
<dbReference type="GO" id="GO:0005886">
    <property type="term" value="C:plasma membrane"/>
    <property type="evidence" value="ECO:0000314"/>
    <property type="project" value="UniProtKB"/>
</dbReference>
<dbReference type="GO" id="GO:0098636">
    <property type="term" value="C:protein complex involved in cell adhesion"/>
    <property type="evidence" value="ECO:0000314"/>
    <property type="project" value="UniProtKB"/>
</dbReference>
<dbReference type="GO" id="GO:0036477">
    <property type="term" value="C:somatodendritic compartment"/>
    <property type="evidence" value="ECO:0000250"/>
    <property type="project" value="UniProtKB"/>
</dbReference>
<dbReference type="GO" id="GO:0070160">
    <property type="term" value="C:tight junction"/>
    <property type="evidence" value="ECO:0000250"/>
    <property type="project" value="UniProtKB"/>
</dbReference>
<dbReference type="GO" id="GO:0005178">
    <property type="term" value="F:integrin binding"/>
    <property type="evidence" value="ECO:0000314"/>
    <property type="project" value="UniProtKB"/>
</dbReference>
<dbReference type="GO" id="GO:0098609">
    <property type="term" value="P:cell-cell adhesion"/>
    <property type="evidence" value="ECO:0000315"/>
    <property type="project" value="UniProtKB"/>
</dbReference>
<dbReference type="GO" id="GO:0045123">
    <property type="term" value="P:cellular extravasation"/>
    <property type="evidence" value="ECO:0000314"/>
    <property type="project" value="UniProtKB"/>
</dbReference>
<dbReference type="GO" id="GO:0097241">
    <property type="term" value="P:hematopoietic stem cell migration to bone marrow"/>
    <property type="evidence" value="ECO:0000315"/>
    <property type="project" value="UniProtKB"/>
</dbReference>
<dbReference type="GO" id="GO:0007159">
    <property type="term" value="P:leukocyte cell-cell adhesion"/>
    <property type="evidence" value="ECO:0000318"/>
    <property type="project" value="GO_Central"/>
</dbReference>
<dbReference type="GO" id="GO:0050901">
    <property type="term" value="P:leukocyte tethering or rolling"/>
    <property type="evidence" value="ECO:0000314"/>
    <property type="project" value="ARUK-UCL"/>
</dbReference>
<dbReference type="GO" id="GO:0071593">
    <property type="term" value="P:lymphocyte aggregation"/>
    <property type="evidence" value="ECO:0000314"/>
    <property type="project" value="ARUK-UCL"/>
</dbReference>
<dbReference type="GO" id="GO:0035633">
    <property type="term" value="P:maintenance of blood-brain barrier"/>
    <property type="evidence" value="ECO:0000303"/>
    <property type="project" value="ARUK-UCL"/>
</dbReference>
<dbReference type="GO" id="GO:0031642">
    <property type="term" value="P:negative regulation of myelination"/>
    <property type="evidence" value="ECO:0000250"/>
    <property type="project" value="UniProtKB"/>
</dbReference>
<dbReference type="GO" id="GO:2000403">
    <property type="term" value="P:positive regulation of lymphocyte migration"/>
    <property type="evidence" value="ECO:0000314"/>
    <property type="project" value="ARUK-UCL"/>
</dbReference>
<dbReference type="GO" id="GO:0007286">
    <property type="term" value="P:spermatid development"/>
    <property type="evidence" value="ECO:0000250"/>
    <property type="project" value="UniProtKB"/>
</dbReference>
<dbReference type="CDD" id="cd20946">
    <property type="entry name" value="IgV_1_JAM1-like"/>
    <property type="match status" value="1"/>
</dbReference>
<dbReference type="FunFam" id="2.60.40.10:FF:001393">
    <property type="entry name" value="Junctional adhesion molecule 2"/>
    <property type="match status" value="1"/>
</dbReference>
<dbReference type="FunFam" id="2.60.40.10:FF:000342">
    <property type="entry name" value="Junctional adhesion molecule A"/>
    <property type="match status" value="1"/>
</dbReference>
<dbReference type="Gene3D" id="2.60.40.10">
    <property type="entry name" value="Immunoglobulins"/>
    <property type="match status" value="2"/>
</dbReference>
<dbReference type="InterPro" id="IPR007110">
    <property type="entry name" value="Ig-like_dom"/>
</dbReference>
<dbReference type="InterPro" id="IPR036179">
    <property type="entry name" value="Ig-like_dom_sf"/>
</dbReference>
<dbReference type="InterPro" id="IPR013783">
    <property type="entry name" value="Ig-like_fold"/>
</dbReference>
<dbReference type="InterPro" id="IPR003599">
    <property type="entry name" value="Ig_sub"/>
</dbReference>
<dbReference type="InterPro" id="IPR003598">
    <property type="entry name" value="Ig_sub2"/>
</dbReference>
<dbReference type="InterPro" id="IPR013106">
    <property type="entry name" value="Ig_V-set"/>
</dbReference>
<dbReference type="InterPro" id="IPR042625">
    <property type="entry name" value="JAM2"/>
</dbReference>
<dbReference type="PANTHER" id="PTHR44663">
    <property type="entry name" value="JUNCTIONAL ADHESION MOLECULE B"/>
    <property type="match status" value="1"/>
</dbReference>
<dbReference type="PANTHER" id="PTHR44663:SF2">
    <property type="entry name" value="JUNCTIONAL ADHESION MOLECULE B"/>
    <property type="match status" value="1"/>
</dbReference>
<dbReference type="Pfam" id="PF13927">
    <property type="entry name" value="Ig_3"/>
    <property type="match status" value="1"/>
</dbReference>
<dbReference type="Pfam" id="PF07686">
    <property type="entry name" value="V-set"/>
    <property type="match status" value="1"/>
</dbReference>
<dbReference type="SMART" id="SM00409">
    <property type="entry name" value="IG"/>
    <property type="match status" value="2"/>
</dbReference>
<dbReference type="SMART" id="SM00408">
    <property type="entry name" value="IGc2"/>
    <property type="match status" value="2"/>
</dbReference>
<dbReference type="SUPFAM" id="SSF48726">
    <property type="entry name" value="Immunoglobulin"/>
    <property type="match status" value="2"/>
</dbReference>
<dbReference type="PROSITE" id="PS50835">
    <property type="entry name" value="IG_LIKE"/>
    <property type="match status" value="2"/>
</dbReference>
<protein>
    <recommendedName>
        <fullName>Junctional adhesion molecule B</fullName>
        <shortName>JAM-B</shortName>
    </recommendedName>
    <alternativeName>
        <fullName evidence="17">Junctional adhesion molecule 2</fullName>
        <shortName evidence="17">JAM-2</shortName>
    </alternativeName>
    <alternativeName>
        <fullName evidence="16">Vascular endothelial junction-associated molecule</fullName>
        <shortName evidence="16">VE-JAM</shortName>
    </alternativeName>
    <cdAntigenName>CD322</cdAntigenName>
</protein>
<sequence>MARRSRHRLLLLLLRYLVVALGYHKAYGFSAPKDQQVVTAVEYQEAILACKTPKKTVSSRLEWKKLGRSVSFVYYQQTLQGDFKNRAEMIDFNIRIKNVTRSDAGKYRCEVSAPSEQGQNLEEDTVTLEVLVAPAVPSCEVPSSALSGTVVELRCQDKEGNPAPEYTWFKDGIRLLENPRLGSQSTNSSYTMNTKTGTLQFNTVSKLDTGEYSCEARNSVGYRRCPGKRMQVDDLNISGIIAAVVVVALVISVCGLGVCYAQRKGYFSKETSFQKSNSSSKATTMSENDFKHTKSFII</sequence>
<feature type="signal peptide" evidence="5 11">
    <location>
        <begin position="1"/>
        <end position="28"/>
    </location>
</feature>
<feature type="chain" id="PRO_0000015069" description="Junctional adhesion molecule B">
    <location>
        <begin position="29"/>
        <end position="298"/>
    </location>
</feature>
<feature type="topological domain" description="Extracellular" evidence="3">
    <location>
        <begin position="29"/>
        <end position="238"/>
    </location>
</feature>
<feature type="transmembrane region" description="Helical" evidence="3">
    <location>
        <begin position="239"/>
        <end position="259"/>
    </location>
</feature>
<feature type="topological domain" description="Cytoplasmic" evidence="3">
    <location>
        <begin position="260"/>
        <end position="298"/>
    </location>
</feature>
<feature type="domain" description="Ig-like V-type" evidence="4">
    <location>
        <begin position="32"/>
        <end position="127"/>
    </location>
</feature>
<feature type="domain" description="Ig-like C2-type" evidence="4">
    <location>
        <begin position="134"/>
        <end position="238"/>
    </location>
</feature>
<feature type="glycosylation site" description="N-linked (GlcNAc...) asparagine" evidence="12">
    <location>
        <position position="98"/>
    </location>
</feature>
<feature type="glycosylation site" description="N-linked (GlcNAc...) asparagine" evidence="3">
    <location>
        <position position="187"/>
    </location>
</feature>
<feature type="glycosylation site" description="N-linked (GlcNAc...) asparagine" evidence="3">
    <location>
        <position position="236"/>
    </location>
</feature>
<feature type="disulfide bond" evidence="4">
    <location>
        <begin position="50"/>
        <end position="109"/>
    </location>
</feature>
<feature type="disulfide bond" evidence="4">
    <location>
        <begin position="155"/>
        <end position="214"/>
    </location>
</feature>
<feature type="splice variant" id="VSP_045153" description="In isoform 2." evidence="19">
    <location>
        <begin position="44"/>
        <end position="79"/>
    </location>
</feature>
<feature type="splice variant" id="VSP_047352" description="In isoform 3." evidence="18">
    <original>DFKHTKSFII</original>
    <variation>VQWLTPVIPALWKAAAGGSRGQEF</variation>
    <location>
        <begin position="289"/>
        <end position="298"/>
    </location>
</feature>
<feature type="sequence variant" id="VAR_083943" description="In IBGC8." evidence="15">
    <location>
        <begin position="60"/>
        <end position="298"/>
    </location>
</feature>
<feature type="sequence variant" id="VAR_083944" description="In IBGC8; dbSNP:rs1383641309." evidence="15">
    <original>R</original>
    <variation>H</variation>
    <location>
        <position position="108"/>
    </location>
</feature>
<feature type="sequence variant" id="VAR_083945" description="In IBGC8; loss of localization to the plasma membrane; mainly retained in the cytoplasm; dbSNP:rs1230941179." evidence="14">
    <original>W</original>
    <variation>C</variation>
    <location>
        <position position="168"/>
    </location>
</feature>
<feature type="sequence variant" id="VAR_083946" description="In IBGC8; loss of protein expression." evidence="15">
    <location>
        <begin position="229"/>
        <end position="298"/>
    </location>
</feature>
<feature type="sequence variant" id="VAR_049973" description="In dbSNP:rs9976382.">
    <original>S</original>
    <variation>R</variation>
    <location>
        <position position="286"/>
    </location>
</feature>
<feature type="mutagenesis site" description="No effect on binding of JAM3 or integrin." evidence="9">
    <original>D</original>
    <variation>A</variation>
    <location>
        <position position="82"/>
    </location>
</feature>
<feature type="sequence conflict" description="In Ref. 3; AAL82538." evidence="20" ref="3">
    <original>E</original>
    <variation>G</variation>
    <location>
        <position position="270"/>
    </location>
</feature>
<proteinExistence type="evidence at protein level"/>
<accession>P57087</accession>
<accession>B2R6T9</accession>
<accession>B4DGT9</accession>
<accession>Q6UXG6</accession>
<accession>Q6YNC1</accession>
<name>JAM2_HUMAN</name>
<gene>
    <name evidence="21" type="primary">JAM2</name>
    <name evidence="21" type="synonym">C21orf43</name>
    <name evidence="16" type="synonym">VEJAM</name>
    <name type="ORF">UNQ219/PRO245</name>
</gene>
<comment type="function">
    <text evidence="1 2 7 8 9 10 13">Junctional adhesion protein that mediates heterotypic cell-cell interactions with its cognate receptor JAM3 to regulate different cellular processes (PubMed:11590146, PubMed:11823489, PubMed:24357068). Plays a role in homing and mobilization of hematopoietic stem and progenitor cells within the bone marrow (PubMed:24357068). At the surface of bone marrow stromal cells, it contributes to the retention of the hematopoietic stem and progenitor cells expressing JAM3 (PubMed:11590146, PubMed:24357068). Plays a central role in leukocytes extravasation by facilitating not only transmigration but also tethering and rolling of leukocytes along the endothelium (PubMed:12239159). Tethering and rolling of leukocytes are dependent on the binding by JAM2 of the integrin alpha-4/beta-1 (PubMed:12070135). Plays a role in spermatogenesis where JAM2 and JAM3, which are respectively expressed by Sertoli and germ cells, mediate an interaction between both cell types and play an essential role in the anchorage of germ cells onto Sertoli cells and the assembly of cell polarity complexes during spermatid differentiation (By similarity). Also functions as an inhibitory somatodendritic cue that prevents the myelination of non-axonal parts of neurons (By similarity). During myogenesis, it is involved in myocyte fusion (By similarity). May also play a role in angiogenesis (By similarity).</text>
</comment>
<comment type="interaction">
    <interactant intactId="EBI-3918416">
        <id>P57087</id>
    </interactant>
    <interactant intactId="EBI-4314733">
        <id>Q9BX67</id>
        <label>JAM3</label>
    </interactant>
    <organismsDiffer>false</organismsDiffer>
    <experiments>2</experiments>
</comment>
<comment type="subcellular location">
    <subcellularLocation>
        <location evidence="5 7 14">Cell membrane</location>
        <topology evidence="5 7">Single-pass type I membrane protein</topology>
    </subcellularLocation>
    <subcellularLocation>
        <location evidence="5 6">Cell junction</location>
    </subcellularLocation>
    <subcellularLocation>
        <location evidence="2">Cell junction</location>
        <location evidence="2">Tight junction</location>
    </subcellularLocation>
    <text evidence="2">Localized at tight junctions of both epithelial and endothelial cells (By similarity). Specifically localized within the somatodendritic compartment of neurons and excluded from the axon (By similarity).</text>
</comment>
<comment type="alternative products">
    <event type="alternative splicing"/>
    <isoform>
        <id>P57087-1</id>
        <name>1</name>
        <sequence type="displayed"/>
    </isoform>
    <isoform>
        <id>P57087-2</id>
        <name>2</name>
        <sequence type="described" ref="VSP_045153"/>
    </isoform>
    <isoform>
        <id>P57087-3</id>
        <name>3</name>
        <sequence type="described" ref="VSP_047352"/>
    </isoform>
</comment>
<comment type="tissue specificity">
    <text evidence="5 6 14">Highly expressed in heart, placenta, lung, foreskin and lymph node (PubMed:10779521, PubMed:10945976). Prominently expressed on high endothelial venules and also present on the endothelia of other vessels (at protein level) (PubMed:10779521, PubMed:10945976). Also expressed in the brain in the caudate nuclei (PubMed:31851307).</text>
</comment>
<comment type="domain">
    <text evidence="9">The Ig-like V-type domain is necessary and sufficient to mediate interaction with JAM3 and integrin alpha-4/beta-1.</text>
</comment>
<comment type="disease" evidence="14 15">
    <disease id="DI-05778">
        <name>Basal ganglia calcification, idiopathic, 8, autosomal recessive</name>
        <acronym>IBGC8</acronym>
        <description>A form of basal ganglia calcification, a genetically heterogeneous condition characterized by symmetric calcification in the basal ganglia and other brain regions. Affected individuals can either be asymptomatic or show a wide spectrum of neuropsychiatric symptoms, including parkinsonism, dystonia, tremor, ataxia, dementia, psychosis, seizures, and chronic headache. Serum levels of calcium, phosphate, alkaline phosphatase and parathyroid hormone are normal. The neuropathological hallmark of the disease is vascular and pericapillary calcification, mainly of calcium phosphate, in the affected brain areas.</description>
        <dbReference type="MIM" id="618824"/>
    </disease>
    <text>The disease is caused by variants affecting the gene represented in this entry.</text>
</comment>
<comment type="similarity">
    <text evidence="20">Belongs to the immunoglobulin superfamily.</text>
</comment>
<evidence type="ECO:0000250" key="1">
    <source>
        <dbReference type="UniProtKB" id="A0A0R4IGV4"/>
    </source>
</evidence>
<evidence type="ECO:0000250" key="2">
    <source>
        <dbReference type="UniProtKB" id="Q9JI59"/>
    </source>
</evidence>
<evidence type="ECO:0000255" key="3"/>
<evidence type="ECO:0000255" key="4">
    <source>
        <dbReference type="PROSITE-ProRule" id="PRU00114"/>
    </source>
</evidence>
<evidence type="ECO:0000269" key="5">
    <source>
    </source>
</evidence>
<evidence type="ECO:0000269" key="6">
    <source>
    </source>
</evidence>
<evidence type="ECO:0000269" key="7">
    <source>
    </source>
</evidence>
<evidence type="ECO:0000269" key="8">
    <source>
    </source>
</evidence>
<evidence type="ECO:0000269" key="9">
    <source>
    </source>
</evidence>
<evidence type="ECO:0000269" key="10">
    <source>
    </source>
</evidence>
<evidence type="ECO:0000269" key="11">
    <source>
    </source>
</evidence>
<evidence type="ECO:0000269" key="12">
    <source>
    </source>
</evidence>
<evidence type="ECO:0000269" key="13">
    <source>
    </source>
</evidence>
<evidence type="ECO:0000269" key="14">
    <source>
    </source>
</evidence>
<evidence type="ECO:0000269" key="15">
    <source>
    </source>
</evidence>
<evidence type="ECO:0000303" key="16">
    <source>
    </source>
</evidence>
<evidence type="ECO:0000303" key="17">
    <source>
    </source>
</evidence>
<evidence type="ECO:0000303" key="18">
    <source>
    </source>
</evidence>
<evidence type="ECO:0000303" key="19">
    <source>
    </source>
</evidence>
<evidence type="ECO:0000305" key="20"/>
<evidence type="ECO:0000312" key="21">
    <source>
        <dbReference type="HGNC" id="HGNC:14686"/>
    </source>
</evidence>
<reference key="1">
    <citation type="journal article" date="2000" name="J. Biol. Chem.">
        <title>Vascular endothelial junction-associated molecule, a novel member of the immunoglobulin superfamily, is localized to intercellular boundaries of endothelial cells.</title>
        <authorList>
            <person name="Palmeri D."/>
            <person name="van Zante A."/>
            <person name="Huang C.-C."/>
            <person name="Hemmerich S."/>
            <person name="Rosen S.D."/>
        </authorList>
    </citation>
    <scope>NUCLEOTIDE SEQUENCE [MRNA] (ISOFORM 1)</scope>
    <scope>PROTEIN SEQUENCE OF 29-33</scope>
    <scope>SUBCELLULAR LOCATION</scope>
    <scope>TOPOLOGY</scope>
    <scope>TISSUE SPECIFICITY</scope>
    <source>
        <tissue>Vascular endothelial cell</tissue>
    </source>
</reference>
<reference key="2">
    <citation type="journal article" date="2000" name="J. Biol. Chem.">
        <title>A novel protein with homology to the junctional adhesion molecule: Characterization of leukocyte interactions.</title>
        <authorList>
            <person name="Cunningham S.A."/>
            <person name="Arrate M.P."/>
            <person name="Rodriguez J.M."/>
            <person name="Bjercke R.J."/>
            <person name="Vanderslice P."/>
            <person name="Morris A.P."/>
            <person name="Brock T.A."/>
        </authorList>
    </citation>
    <scope>NUCLEOTIDE SEQUENCE [MRNA] (ISOFORM 1)</scope>
    <scope>SUBCELLULAR LOCATION</scope>
    <scope>TISSUE SPECIFICITY</scope>
    <source>
        <tissue>Placenta</tissue>
    </source>
</reference>
<reference key="3">
    <citation type="journal article" date="2002" name="Genomics">
        <title>Annotation of human chromosome 21 for relevance to Down syndrome: gene structure and expression analysis.</title>
        <authorList>
            <person name="Gardiner K."/>
            <person name="Slavov D."/>
            <person name="Bechtel L."/>
            <person name="Davisson M."/>
        </authorList>
    </citation>
    <scope>NUCLEOTIDE SEQUENCE [MRNA] (ISOFORM 1)</scope>
</reference>
<reference key="4">
    <citation type="journal article" date="2003" name="Genome Res.">
        <title>The secreted protein discovery initiative (SPDI), a large-scale effort to identify novel human secreted and transmembrane proteins: a bioinformatics assessment.</title>
        <authorList>
            <person name="Clark H.F."/>
            <person name="Gurney A.L."/>
            <person name="Abaya E."/>
            <person name="Baker K."/>
            <person name="Baldwin D.T."/>
            <person name="Brush J."/>
            <person name="Chen J."/>
            <person name="Chow B."/>
            <person name="Chui C."/>
            <person name="Crowley C."/>
            <person name="Currell B."/>
            <person name="Deuel B."/>
            <person name="Dowd P."/>
            <person name="Eaton D."/>
            <person name="Foster J.S."/>
            <person name="Grimaldi C."/>
            <person name="Gu Q."/>
            <person name="Hass P.E."/>
            <person name="Heldens S."/>
            <person name="Huang A."/>
            <person name="Kim H.S."/>
            <person name="Klimowski L."/>
            <person name="Jin Y."/>
            <person name="Johnson S."/>
            <person name="Lee J."/>
            <person name="Lewis L."/>
            <person name="Liao D."/>
            <person name="Mark M.R."/>
            <person name="Robbie E."/>
            <person name="Sanchez C."/>
            <person name="Schoenfeld J."/>
            <person name="Seshagiri S."/>
            <person name="Simmons L."/>
            <person name="Singh J."/>
            <person name="Smith V."/>
            <person name="Stinson J."/>
            <person name="Vagts A."/>
            <person name="Vandlen R.L."/>
            <person name="Watanabe C."/>
            <person name="Wieand D."/>
            <person name="Woods K."/>
            <person name="Xie M.-H."/>
            <person name="Yansura D.G."/>
            <person name="Yi S."/>
            <person name="Yu G."/>
            <person name="Yuan J."/>
            <person name="Zhang M."/>
            <person name="Zhang Z."/>
            <person name="Goddard A.D."/>
            <person name="Wood W.I."/>
            <person name="Godowski P.J."/>
            <person name="Gray A.M."/>
        </authorList>
    </citation>
    <scope>NUCLEOTIDE SEQUENCE [LARGE SCALE MRNA] (ISOFORM 3)</scope>
</reference>
<reference key="5">
    <citation type="journal article" date="2004" name="Nat. Genet.">
        <title>Complete sequencing and characterization of 21,243 full-length human cDNAs.</title>
        <authorList>
            <person name="Ota T."/>
            <person name="Suzuki Y."/>
            <person name="Nishikawa T."/>
            <person name="Otsuki T."/>
            <person name="Sugiyama T."/>
            <person name="Irie R."/>
            <person name="Wakamatsu A."/>
            <person name="Hayashi K."/>
            <person name="Sato H."/>
            <person name="Nagai K."/>
            <person name="Kimura K."/>
            <person name="Makita H."/>
            <person name="Sekine M."/>
            <person name="Obayashi M."/>
            <person name="Nishi T."/>
            <person name="Shibahara T."/>
            <person name="Tanaka T."/>
            <person name="Ishii S."/>
            <person name="Yamamoto J."/>
            <person name="Saito K."/>
            <person name="Kawai Y."/>
            <person name="Isono Y."/>
            <person name="Nakamura Y."/>
            <person name="Nagahari K."/>
            <person name="Murakami K."/>
            <person name="Yasuda T."/>
            <person name="Iwayanagi T."/>
            <person name="Wagatsuma M."/>
            <person name="Shiratori A."/>
            <person name="Sudo H."/>
            <person name="Hosoiri T."/>
            <person name="Kaku Y."/>
            <person name="Kodaira H."/>
            <person name="Kondo H."/>
            <person name="Sugawara M."/>
            <person name="Takahashi M."/>
            <person name="Kanda K."/>
            <person name="Yokoi T."/>
            <person name="Furuya T."/>
            <person name="Kikkawa E."/>
            <person name="Omura Y."/>
            <person name="Abe K."/>
            <person name="Kamihara K."/>
            <person name="Katsuta N."/>
            <person name="Sato K."/>
            <person name="Tanikawa M."/>
            <person name="Yamazaki M."/>
            <person name="Ninomiya K."/>
            <person name="Ishibashi T."/>
            <person name="Yamashita H."/>
            <person name="Murakawa K."/>
            <person name="Fujimori K."/>
            <person name="Tanai H."/>
            <person name="Kimata M."/>
            <person name="Watanabe M."/>
            <person name="Hiraoka S."/>
            <person name="Chiba Y."/>
            <person name="Ishida S."/>
            <person name="Ono Y."/>
            <person name="Takiguchi S."/>
            <person name="Watanabe S."/>
            <person name="Yosida M."/>
            <person name="Hotuta T."/>
            <person name="Kusano J."/>
            <person name="Kanehori K."/>
            <person name="Takahashi-Fujii A."/>
            <person name="Hara H."/>
            <person name="Tanase T.-O."/>
            <person name="Nomura Y."/>
            <person name="Togiya S."/>
            <person name="Komai F."/>
            <person name="Hara R."/>
            <person name="Takeuchi K."/>
            <person name="Arita M."/>
            <person name="Imose N."/>
            <person name="Musashino K."/>
            <person name="Yuuki H."/>
            <person name="Oshima A."/>
            <person name="Sasaki N."/>
            <person name="Aotsuka S."/>
            <person name="Yoshikawa Y."/>
            <person name="Matsunawa H."/>
            <person name="Ichihara T."/>
            <person name="Shiohata N."/>
            <person name="Sano S."/>
            <person name="Moriya S."/>
            <person name="Momiyama H."/>
            <person name="Satoh N."/>
            <person name="Takami S."/>
            <person name="Terashima Y."/>
            <person name="Suzuki O."/>
            <person name="Nakagawa S."/>
            <person name="Senoh A."/>
            <person name="Mizoguchi H."/>
            <person name="Goto Y."/>
            <person name="Shimizu F."/>
            <person name="Wakebe H."/>
            <person name="Hishigaki H."/>
            <person name="Watanabe T."/>
            <person name="Sugiyama A."/>
            <person name="Takemoto M."/>
            <person name="Kawakami B."/>
            <person name="Yamazaki M."/>
            <person name="Watanabe K."/>
            <person name="Kumagai A."/>
            <person name="Itakura S."/>
            <person name="Fukuzumi Y."/>
            <person name="Fujimori Y."/>
            <person name="Komiyama M."/>
            <person name="Tashiro H."/>
            <person name="Tanigami A."/>
            <person name="Fujiwara T."/>
            <person name="Ono T."/>
            <person name="Yamada K."/>
            <person name="Fujii Y."/>
            <person name="Ozaki K."/>
            <person name="Hirao M."/>
            <person name="Ohmori Y."/>
            <person name="Kawabata A."/>
            <person name="Hikiji T."/>
            <person name="Kobatake N."/>
            <person name="Inagaki H."/>
            <person name="Ikema Y."/>
            <person name="Okamoto S."/>
            <person name="Okitani R."/>
            <person name="Kawakami T."/>
            <person name="Noguchi S."/>
            <person name="Itoh T."/>
            <person name="Shigeta K."/>
            <person name="Senba T."/>
            <person name="Matsumura K."/>
            <person name="Nakajima Y."/>
            <person name="Mizuno T."/>
            <person name="Morinaga M."/>
            <person name="Sasaki M."/>
            <person name="Togashi T."/>
            <person name="Oyama M."/>
            <person name="Hata H."/>
            <person name="Watanabe M."/>
            <person name="Komatsu T."/>
            <person name="Mizushima-Sugano J."/>
            <person name="Satoh T."/>
            <person name="Shirai Y."/>
            <person name="Takahashi Y."/>
            <person name="Nakagawa K."/>
            <person name="Okumura K."/>
            <person name="Nagase T."/>
            <person name="Nomura N."/>
            <person name="Kikuchi H."/>
            <person name="Masuho Y."/>
            <person name="Yamashita R."/>
            <person name="Nakai K."/>
            <person name="Yada T."/>
            <person name="Nakamura Y."/>
            <person name="Ohara O."/>
            <person name="Isogai T."/>
            <person name="Sugano S."/>
        </authorList>
    </citation>
    <scope>NUCLEOTIDE SEQUENCE [LARGE SCALE MRNA] (ISOFORMS 1 AND 2)</scope>
    <source>
        <tissue>Brain</tissue>
    </source>
</reference>
<reference key="6">
    <citation type="journal article" date="2000" name="Nature">
        <title>The DNA sequence of human chromosome 21.</title>
        <authorList>
            <person name="Hattori M."/>
            <person name="Fujiyama A."/>
            <person name="Taylor T.D."/>
            <person name="Watanabe H."/>
            <person name="Yada T."/>
            <person name="Park H.-S."/>
            <person name="Toyoda A."/>
            <person name="Ishii K."/>
            <person name="Totoki Y."/>
            <person name="Choi D.-K."/>
            <person name="Groner Y."/>
            <person name="Soeda E."/>
            <person name="Ohki M."/>
            <person name="Takagi T."/>
            <person name="Sakaki Y."/>
            <person name="Taudien S."/>
            <person name="Blechschmidt K."/>
            <person name="Polley A."/>
            <person name="Menzel U."/>
            <person name="Delabar J."/>
            <person name="Kumpf K."/>
            <person name="Lehmann R."/>
            <person name="Patterson D."/>
            <person name="Reichwald K."/>
            <person name="Rump A."/>
            <person name="Schillhabel M."/>
            <person name="Schudy A."/>
            <person name="Zimmermann W."/>
            <person name="Rosenthal A."/>
            <person name="Kudoh J."/>
            <person name="Shibuya K."/>
            <person name="Kawasaki K."/>
            <person name="Asakawa S."/>
            <person name="Shintani A."/>
            <person name="Sasaki T."/>
            <person name="Nagamine K."/>
            <person name="Mitsuyama S."/>
            <person name="Antonarakis S.E."/>
            <person name="Minoshima S."/>
            <person name="Shimizu N."/>
            <person name="Nordsiek G."/>
            <person name="Hornischer K."/>
            <person name="Brandt P."/>
            <person name="Scharfe M."/>
            <person name="Schoen O."/>
            <person name="Desario A."/>
            <person name="Reichelt J."/>
            <person name="Kauer G."/>
            <person name="Bloecker H."/>
            <person name="Ramser J."/>
            <person name="Beck A."/>
            <person name="Klages S."/>
            <person name="Hennig S."/>
            <person name="Riesselmann L."/>
            <person name="Dagand E."/>
            <person name="Wehrmeyer S."/>
            <person name="Borzym K."/>
            <person name="Gardiner K."/>
            <person name="Nizetic D."/>
            <person name="Francis F."/>
            <person name="Lehrach H."/>
            <person name="Reinhardt R."/>
            <person name="Yaspo M.-L."/>
        </authorList>
    </citation>
    <scope>NUCLEOTIDE SEQUENCE [LARGE SCALE GENOMIC DNA]</scope>
</reference>
<reference key="7">
    <citation type="journal article" date="2004" name="Genome Res.">
        <title>The status, quality, and expansion of the NIH full-length cDNA project: the Mammalian Gene Collection (MGC).</title>
        <authorList>
            <consortium name="The MGC Project Team"/>
        </authorList>
    </citation>
    <scope>NUCLEOTIDE SEQUENCE [LARGE SCALE MRNA] (ISOFORM 1)</scope>
    <source>
        <tissue>Lung</tissue>
    </source>
</reference>
<reference key="8">
    <citation type="journal article" date="2004" name="Protein Sci.">
        <title>Signal peptide prediction based on analysis of experimentally verified cleavage sites.</title>
        <authorList>
            <person name="Zhang Z."/>
            <person name="Henzel W.J."/>
        </authorList>
    </citation>
    <scope>PROTEIN SEQUENCE OF 29-43</scope>
</reference>
<reference key="9">
    <citation type="journal article" date="2001" name="J. Biol. Chem.">
        <title>Cloning of human junctional adhesion molecule 3 (JAM3) and its identification as the JAM2 counter-receptor.</title>
        <authorList>
            <person name="Arrate M.P."/>
            <person name="Rodriguez J.M."/>
            <person name="Tran T.M."/>
            <person name="Brock T.A."/>
            <person name="Cunningham S.A."/>
        </authorList>
    </citation>
    <scope>FUNCTION</scope>
    <scope>SUBCELLULAR LOCATION</scope>
    <scope>TOPOLOGY</scope>
</reference>
<reference key="10">
    <citation type="journal article" date="2002" name="Blood">
        <title>Junctional adhesion molecule-2 (JAM-2) promotes lymphocyte transendothelial migration.</title>
        <authorList>
            <person name="Johnson-Leger C.A."/>
            <person name="Aurrand-Lions M."/>
            <person name="Beltraminelli N."/>
            <person name="Fasel N."/>
            <person name="Imhof B.A."/>
        </authorList>
    </citation>
    <scope>FUNCTION</scope>
</reference>
<reference key="11">
    <citation type="journal article" date="2002" name="J. Biol. Chem.">
        <title>JAM2 interacts with alpha4beta1. Facilitation by JAM3.</title>
        <authorList>
            <person name="Cunningham S.A."/>
            <person name="Rodriguez J.M."/>
            <person name="Arrate M.P."/>
            <person name="Tran T.M."/>
            <person name="Brock T.A."/>
        </authorList>
    </citation>
    <scope>FUNCTION</scope>
    <scope>DOMAIN</scope>
    <scope>MUTAGENESIS OF ASP-82</scope>
</reference>
<reference key="12">
    <citation type="journal article" date="2002" name="J. Immunol.">
        <title>Vascular endothelial-junctional adhesion molecule (VE-JAM)/JAM 2 interacts with T, NK, and dendritic cells through JAM 3.</title>
        <authorList>
            <person name="Liang T.W."/>
            <person name="Chiu H.H."/>
            <person name="Gurney A."/>
            <person name="Sidle A."/>
            <person name="Tumas D.B."/>
            <person name="Schow P."/>
            <person name="Foster J."/>
            <person name="Klassen T."/>
            <person name="Dennis K."/>
            <person name="DeMarco R.A."/>
            <person name="Pham T."/>
            <person name="Frantz G."/>
            <person name="Fong S."/>
        </authorList>
    </citation>
    <scope>FUNCTION</scope>
</reference>
<reference key="13">
    <citation type="journal article" date="2003" name="Trends Immunol.">
        <title>Leukocyte-endothelial-cell interactions in leukocyte transmigration and the inflammatory response.</title>
        <authorList>
            <person name="Muller W.A."/>
        </authorList>
    </citation>
    <scope>REVIEW</scope>
    <scope>NOMENCLATURE</scope>
</reference>
<reference key="14">
    <citation type="journal article" date="2005" name="J. Proteome Res.">
        <title>Human plasma N-glycoproteome analysis by immunoaffinity subtraction, hydrazide chemistry, and mass spectrometry.</title>
        <authorList>
            <person name="Liu T."/>
            <person name="Qian W.-J."/>
            <person name="Gritsenko M.A."/>
            <person name="Camp D.G. II"/>
            <person name="Monroe M.E."/>
            <person name="Moore R.J."/>
            <person name="Smith R.D."/>
        </authorList>
    </citation>
    <scope>GLYCOSYLATION [LARGE SCALE ANALYSIS] AT ASN-98</scope>
    <source>
        <tissue>Plasma</tissue>
    </source>
</reference>
<reference key="15">
    <citation type="journal article" date="2014" name="Stem Cells">
        <title>Function of Jam-B/Jam-C interaction in homing and mobilization of human and mouse hematopoietic stem and progenitor cells.</title>
        <authorList>
            <person name="Arcangeli M.L."/>
            <person name="Bardin F."/>
            <person name="Frontera V."/>
            <person name="Bidaut G."/>
            <person name="Obrados E."/>
            <person name="Adams R.H."/>
            <person name="Chabannon C."/>
            <person name="Aurrand-Lions M."/>
        </authorList>
    </citation>
    <scope>FUNCTION</scope>
</reference>
<reference key="16">
    <citation type="journal article" date="2020" name="Am. J. Hum. Genet.">
        <title>Bi-allelic JAM2 Variants Lead to Early-Onset Recessive Primary Familial Brain Calcification.</title>
        <authorList>
            <consortium name="SYNAPS Study Group"/>
            <person name="Schottlaender L.V."/>
            <person name="Abeti R."/>
            <person name="Jaunmuktane Z."/>
            <person name="Macmillan C."/>
            <person name="Chelban V."/>
            <person name="O'Callaghan B."/>
            <person name="McKinley J."/>
            <person name="Maroofian R."/>
            <person name="Efthymiou S."/>
            <person name="Athanasiou-Fragkouli A."/>
            <person name="Forbes R."/>
            <person name="Soutar M.P.M."/>
            <person name="Livingston J.H."/>
            <person name="Kalmar B."/>
            <person name="Swayne O."/>
            <person name="Hotton G."/>
            <person name="Pittman A."/>
            <person name="Mendes de Oliveira J.R."/>
            <person name="de Grandis M."/>
            <person name="Richard-Loendt A."/>
            <person name="Launchbury F."/>
            <person name="Althonayan J."/>
            <person name="McDonnell G."/>
            <person name="Carr A."/>
            <person name="Khan S."/>
            <person name="Beetz C."/>
            <person name="Bisgin A."/>
            <person name="Tug Bozdogan S."/>
            <person name="Begtrup A."/>
            <person name="Torti E."/>
            <person name="Greensmith L."/>
            <person name="Giunti P."/>
            <person name="Morrison P.J."/>
            <person name="Brandner S."/>
            <person name="Aurrand-Lions M."/>
            <person name="Houlden H."/>
        </authorList>
    </citation>
    <scope>INVOLVEMENT IN IBGC8</scope>
    <scope>VARIANTS IBGC8 60-ARG--ILE-298 DEL; HIS-108 AND 229-ARG--ILE-298 DEL</scope>
    <scope>CHARACTERIZATION OF VARIANT IBGC8 229-ARG--ILE-298 DEL</scope>
</reference>
<reference key="17">
    <citation type="journal article" date="2020" name="Brain">
        <title>Biallelic loss-of-function mutations in JAM2 cause primary familial brain calcification.</title>
        <authorList>
            <person name="Cen Z."/>
            <person name="Chen Y."/>
            <person name="Chen S."/>
            <person name="Wang H."/>
            <person name="Yang D."/>
            <person name="Zhang H."/>
            <person name="Wu H."/>
            <person name="Wang L."/>
            <person name="Tang S."/>
            <person name="Ye J."/>
            <person name="Shen J."/>
            <person name="Wang H."/>
            <person name="Fu F."/>
            <person name="Chen X."/>
            <person name="Xie F."/>
            <person name="Liu P."/>
            <person name="Xu X."/>
            <person name="Cao J."/>
            <person name="Cai P."/>
            <person name="Pan Q."/>
            <person name="Li J."/>
            <person name="Yang W."/>
            <person name="Shan P.F."/>
            <person name="Li Y."/>
            <person name="Liu J.Y."/>
            <person name="Zhang B."/>
            <person name="Luo W."/>
        </authorList>
    </citation>
    <scope>VARIANT IBGC8 CYS-168</scope>
    <scope>CHARACTERIZATION OF VARIANT IBGC8 CYS-168</scope>
    <scope>SUBCELLULAR LOCATION</scope>
    <scope>TISSUE SPECIFICITY</scope>
</reference>
<keyword id="KW-0025">Alternative splicing</keyword>
<keyword id="KW-0965">Cell junction</keyword>
<keyword id="KW-1003">Cell membrane</keyword>
<keyword id="KW-0903">Direct protein sequencing</keyword>
<keyword id="KW-0225">Disease variant</keyword>
<keyword id="KW-1015">Disulfide bond</keyword>
<keyword id="KW-0325">Glycoprotein</keyword>
<keyword id="KW-0393">Immunoglobulin domain</keyword>
<keyword id="KW-0472">Membrane</keyword>
<keyword id="KW-1267">Proteomics identification</keyword>
<keyword id="KW-1185">Reference proteome</keyword>
<keyword id="KW-0732">Signal</keyword>
<keyword id="KW-0796">Tight junction</keyword>
<keyword id="KW-0812">Transmembrane</keyword>
<keyword id="KW-1133">Transmembrane helix</keyword>